<evidence type="ECO:0000250" key="1">
    <source>
        <dbReference type="UniProtKB" id="P38179"/>
    </source>
</evidence>
<evidence type="ECO:0000255" key="2"/>
<evidence type="ECO:0000305" key="3"/>
<comment type="function">
    <text evidence="1">Dol-P-Man:Man(5)GlcNAc(2)-PP-Dol alpha-1,3-mannosyltransferase that operates in the biosynthetic pathway of dolichol-linked oligosaccharides, the glycan precursors employed in protein asparagine (N)-glycosylation. The assembly of dolichol-linked oligosaccharides begins on the cytosolic side of the endoplasmic reticulum membrane and finishes in its lumen. The sequential addition of sugars to dolichol pyrophosphate produces dolichol-linked oligosaccharides containing fourteen sugars, including two GlcNAcs, nine mannoses and three glucoses. Once assembled, the oligosaccharide is transferred from the lipid to nascent proteins by oligosaccharyltransferases. In the lumen of the endoplasmic reticulum, adds the first dolichyl beta-D-mannosyl phosphate derived mannose in an alpha-1,3 linkage to Man(5)GlcNAc(2)-PP-dolichol to produce Man(6)GlcNAc(2)-PP-dolichol.</text>
</comment>
<comment type="catalytic activity">
    <reaction evidence="1">
        <text>an alpha-D-Man-(1-&gt;2)-alpha-D-Man-(1-&gt;2)-alpha-D-Man-(1-&gt;3)-[alpha-D-Man-(1-&gt;6)]-beta-D-Man-(1-&gt;4)-beta-D-GlcNAc-(1-&gt;4)-alpha-D-GlcNAc-diphospho-di-trans,poly-cis-dolichol + a di-trans,poly-cis-dolichyl beta-D-mannosyl phosphate = an alpha-D-Man-(1-&gt;2)-alpha-D-Man-(1-&gt;2)-alpha-D-Man-(1-&gt;3)-[alpha-D-Man-(1-&gt;3)-alpha-D-Man-(1-&gt;6)]-beta-D-Man-(1-&gt;4)-beta-D-GlcNAc-(1-&gt;4)-alpha-D-GlcNAc-diphospho-di-trans,poly-cis-dolichol + a di-trans,poly-cis-dolichyl phosphate + H(+)</text>
        <dbReference type="Rhea" id="RHEA:29527"/>
        <dbReference type="Rhea" id="RHEA-COMP:19498"/>
        <dbReference type="Rhea" id="RHEA-COMP:19501"/>
        <dbReference type="Rhea" id="RHEA-COMP:19516"/>
        <dbReference type="Rhea" id="RHEA-COMP:19517"/>
        <dbReference type="ChEBI" id="CHEBI:15378"/>
        <dbReference type="ChEBI" id="CHEBI:57683"/>
        <dbReference type="ChEBI" id="CHEBI:58211"/>
        <dbReference type="ChEBI" id="CHEBI:132515"/>
        <dbReference type="ChEBI" id="CHEBI:132516"/>
        <dbReference type="EC" id="2.4.1.258"/>
    </reaction>
    <physiologicalReaction direction="left-to-right" evidence="1">
        <dbReference type="Rhea" id="RHEA:29528"/>
    </physiologicalReaction>
</comment>
<comment type="pathway">
    <text evidence="1">Protein modification; protein glycosylation.</text>
</comment>
<comment type="subcellular location">
    <subcellularLocation>
        <location evidence="1">Endoplasmic reticulum membrane</location>
        <topology evidence="2">Multi-pass membrane protein</topology>
    </subcellularLocation>
</comment>
<comment type="similarity">
    <text evidence="3">Belongs to the glycosyltransferase ALG3 family.</text>
</comment>
<reference key="1">
    <citation type="journal article" date="2005" name="Science">
        <title>The genome of the basidiomycetous yeast and human pathogen Cryptococcus neoformans.</title>
        <authorList>
            <person name="Loftus B.J."/>
            <person name="Fung E."/>
            <person name="Roncaglia P."/>
            <person name="Rowley D."/>
            <person name="Amedeo P."/>
            <person name="Bruno D."/>
            <person name="Vamathevan J."/>
            <person name="Miranda M."/>
            <person name="Anderson I.J."/>
            <person name="Fraser J.A."/>
            <person name="Allen J.E."/>
            <person name="Bosdet I.E."/>
            <person name="Brent M.R."/>
            <person name="Chiu R."/>
            <person name="Doering T.L."/>
            <person name="Donlin M.J."/>
            <person name="D'Souza C.A."/>
            <person name="Fox D.S."/>
            <person name="Grinberg V."/>
            <person name="Fu J."/>
            <person name="Fukushima M."/>
            <person name="Haas B.J."/>
            <person name="Huang J.C."/>
            <person name="Janbon G."/>
            <person name="Jones S.J.M."/>
            <person name="Koo H.L."/>
            <person name="Krzywinski M.I."/>
            <person name="Kwon-Chung K.J."/>
            <person name="Lengeler K.B."/>
            <person name="Maiti R."/>
            <person name="Marra M.A."/>
            <person name="Marra R.E."/>
            <person name="Mathewson C.A."/>
            <person name="Mitchell T.G."/>
            <person name="Pertea M."/>
            <person name="Riggs F.R."/>
            <person name="Salzberg S.L."/>
            <person name="Schein J.E."/>
            <person name="Shvartsbeyn A."/>
            <person name="Shin H."/>
            <person name="Shumway M."/>
            <person name="Specht C.A."/>
            <person name="Suh B.B."/>
            <person name="Tenney A."/>
            <person name="Utterback T.R."/>
            <person name="Wickes B.L."/>
            <person name="Wortman J.R."/>
            <person name="Wye N.H."/>
            <person name="Kronstad J.W."/>
            <person name="Lodge J.K."/>
            <person name="Heitman J."/>
            <person name="Davis R.W."/>
            <person name="Fraser C.M."/>
            <person name="Hyman R.W."/>
        </authorList>
    </citation>
    <scope>NUCLEOTIDE SEQUENCE [LARGE SCALE GENOMIC DNA]</scope>
    <source>
        <strain>B-3501A</strain>
    </source>
</reference>
<gene>
    <name type="primary">ALG3</name>
    <name type="ordered locus">CNBI2040</name>
</gene>
<feature type="chain" id="PRO_0000410101" description="Dol-P-Man:Man(5)GlcNAc(2)-PP-Dol alpha-1,3-mannosyltransferase">
    <location>
        <begin position="1"/>
        <end position="447"/>
    </location>
</feature>
<feature type="topological domain" description="Lumenal" evidence="2">
    <location>
        <begin position="1"/>
        <end position="34"/>
    </location>
</feature>
<feature type="transmembrane region" description="Helical" evidence="2">
    <location>
        <begin position="35"/>
        <end position="55"/>
    </location>
</feature>
<feature type="topological domain" description="Cytoplasmic" evidence="2">
    <location>
        <begin position="56"/>
        <end position="83"/>
    </location>
</feature>
<feature type="transmembrane region" description="Helical" evidence="2">
    <location>
        <begin position="84"/>
        <end position="104"/>
    </location>
</feature>
<feature type="topological domain" description="Lumenal" evidence="2">
    <location>
        <begin position="105"/>
        <end position="118"/>
    </location>
</feature>
<feature type="transmembrane region" description="Helical" evidence="2">
    <location>
        <begin position="119"/>
        <end position="139"/>
    </location>
</feature>
<feature type="topological domain" description="Cytoplasmic" evidence="2">
    <location>
        <begin position="140"/>
        <end position="170"/>
    </location>
</feature>
<feature type="transmembrane region" description="Helical" evidence="2">
    <location>
        <begin position="171"/>
        <end position="191"/>
    </location>
</feature>
<feature type="topological domain" description="Lumenal" evidence="2">
    <location>
        <begin position="192"/>
        <end position="204"/>
    </location>
</feature>
<feature type="transmembrane region" description="Helical" evidence="2">
    <location>
        <begin position="205"/>
        <end position="225"/>
    </location>
</feature>
<feature type="topological domain" description="Cytoplasmic" evidence="2">
    <location>
        <begin position="226"/>
        <end position="232"/>
    </location>
</feature>
<feature type="transmembrane region" description="Helical" evidence="2">
    <location>
        <begin position="233"/>
        <end position="253"/>
    </location>
</feature>
<feature type="topological domain" description="Lumenal" evidence="2">
    <location>
        <begin position="254"/>
        <end position="296"/>
    </location>
</feature>
<feature type="transmembrane region" description="Helical" evidence="2">
    <location>
        <begin position="297"/>
        <end position="317"/>
    </location>
</feature>
<feature type="topological domain" description="Cytoplasmic" evidence="2">
    <location>
        <begin position="318"/>
        <end position="343"/>
    </location>
</feature>
<feature type="transmembrane region" description="Helical" evidence="2">
    <location>
        <begin position="344"/>
        <end position="364"/>
    </location>
</feature>
<feature type="topological domain" description="Lumenal" evidence="2">
    <location>
        <begin position="365"/>
        <end position="379"/>
    </location>
</feature>
<feature type="transmembrane region" description="Helical" evidence="2">
    <location>
        <begin position="380"/>
        <end position="400"/>
    </location>
</feature>
<feature type="topological domain" description="Cytoplasmic" evidence="2">
    <location>
        <begin position="401"/>
        <end position="411"/>
    </location>
</feature>
<feature type="transmembrane region" description="Helical" evidence="2">
    <location>
        <begin position="412"/>
        <end position="432"/>
    </location>
</feature>
<feature type="topological domain" description="Lumenal" evidence="2">
    <location>
        <begin position="433"/>
        <end position="447"/>
    </location>
</feature>
<name>ALG3_CRYNB</name>
<keyword id="KW-0256">Endoplasmic reticulum</keyword>
<keyword id="KW-0328">Glycosyltransferase</keyword>
<keyword id="KW-0472">Membrane</keyword>
<keyword id="KW-0808">Transferase</keyword>
<keyword id="KW-0812">Transmembrane</keyword>
<keyword id="KW-1133">Transmembrane helix</keyword>
<accession>P0CN93</accession>
<accession>Q55M08</accession>
<accession>Q5K8R1</accession>
<organism>
    <name type="scientific">Cryptococcus neoformans var. neoformans serotype D (strain B-3501A)</name>
    <name type="common">Filobasidiella neoformans</name>
    <dbReference type="NCBI Taxonomy" id="283643"/>
    <lineage>
        <taxon>Eukaryota</taxon>
        <taxon>Fungi</taxon>
        <taxon>Dikarya</taxon>
        <taxon>Basidiomycota</taxon>
        <taxon>Agaricomycotina</taxon>
        <taxon>Tremellomycetes</taxon>
        <taxon>Tremellales</taxon>
        <taxon>Cryptococcaceae</taxon>
        <taxon>Cryptococcus</taxon>
        <taxon>Cryptococcus neoformans species complex</taxon>
    </lineage>
</organism>
<sequence>MSRQSLSSPALGQRKGLISHTVDLVRALLFDRRYFWHTAFLLFLGEVALSLLVIWKIPYTKIDWPAYMQQVDMFLAGERDYSKIEGETGPLVYPALHLYIYTAFHRLLPSIENVRPAQFVFLGFYLATYLAISTIYYLAGRPSNGGHHFPQVLLIPLTLSKRAHSIFLLRLFNDPIAMLIFYLSVIAFQIGGRKGWRLGCVLFSLALGVKMNILNFLPGLLVLLFQYRGIVGTVEGLSIIGLIQFLLPAPFFFSKSNPYLIRAYFTSAFDFSRQFLYEWTVNWRFISEETFLSRERAVTLLAGHLTVLGLFAAFKWSPVPGGTLRVLRKGFSDPLNQALEVSQVPAYHIPLVLFSANLIGMLFARSLHYQFHSWYFHQLPFLLYSGAGWGNMLTSVLIWVTVQYAWETAPSTISTSAALLAGHGAMVFGLFFHGMKRPSSSQKSKAK</sequence>
<proteinExistence type="inferred from homology"/>
<dbReference type="EC" id="2.4.1.258" evidence="1"/>
<dbReference type="EMBL" id="AAEY01000044">
    <property type="protein sequence ID" value="EAL18943.1"/>
    <property type="molecule type" value="Genomic_DNA"/>
</dbReference>
<dbReference type="RefSeq" id="XP_773590.1">
    <property type="nucleotide sequence ID" value="XM_768497.1"/>
</dbReference>
<dbReference type="GeneID" id="4938164"/>
<dbReference type="KEGG" id="cnb:CNBI2040"/>
<dbReference type="VEuPathDB" id="FungiDB:CNBI2040"/>
<dbReference type="HOGENOM" id="CLU_035382_3_0_1"/>
<dbReference type="OrthoDB" id="4425at5206"/>
<dbReference type="UniPathway" id="UPA00378"/>
<dbReference type="GO" id="GO:0005789">
    <property type="term" value="C:endoplasmic reticulum membrane"/>
    <property type="evidence" value="ECO:0007669"/>
    <property type="project" value="UniProtKB-SubCell"/>
</dbReference>
<dbReference type="GO" id="GO:0052925">
    <property type="term" value="F:dol-P-Man:Man(5)GlcNAc(2)-PP-Dol alpha-1,3-mannosyltransferase activity"/>
    <property type="evidence" value="ECO:0007669"/>
    <property type="project" value="UniProtKB-EC"/>
</dbReference>
<dbReference type="GO" id="GO:0006486">
    <property type="term" value="P:protein glycosylation"/>
    <property type="evidence" value="ECO:0007669"/>
    <property type="project" value="UniProtKB-UniPathway"/>
</dbReference>
<dbReference type="InterPro" id="IPR007873">
    <property type="entry name" value="Glycosyltransferase_ALG3"/>
</dbReference>
<dbReference type="PANTHER" id="PTHR12646:SF0">
    <property type="entry name" value="DOL-P-MAN:MAN(5)GLCNAC(2)-PP-DOL ALPHA-1,3-MANNOSYLTRANSFERASE"/>
    <property type="match status" value="1"/>
</dbReference>
<dbReference type="PANTHER" id="PTHR12646">
    <property type="entry name" value="NOT56 - RELATED"/>
    <property type="match status" value="1"/>
</dbReference>
<dbReference type="Pfam" id="PF05208">
    <property type="entry name" value="ALG3"/>
    <property type="match status" value="1"/>
</dbReference>
<protein>
    <recommendedName>
        <fullName evidence="1">Dol-P-Man:Man(5)GlcNAc(2)-PP-Dol alpha-1,3-mannosyltransferase</fullName>
        <ecNumber evidence="1">2.4.1.258</ecNumber>
    </recommendedName>
    <alternativeName>
        <fullName>Asparagine-linked glycosylation protein 6</fullName>
    </alternativeName>
    <alternativeName>
        <fullName>Dol-P-Man-dependent alpha(1-3)-mannosyltransferase</fullName>
    </alternativeName>
    <alternativeName>
        <fullName>Dolichyl-P-Man:Man(5)GlcNAc(2)-PP-dolichyl mannosyltransferase</fullName>
    </alternativeName>
</protein>